<proteinExistence type="evidence at transcript level"/>
<name>PSIR_PSICY</name>
<comment type="function">
    <text evidence="4">Transcription factor that may regulate the expression of the gene cluster that mediates the biosynthesis of psilocybin, a psychotropic tryptamine-derived natural product.</text>
</comment>
<comment type="subcellular location">
    <subcellularLocation>
        <location evidence="1">Nucleus</location>
    </subcellularLocation>
</comment>
<gene>
    <name evidence="3" type="primary">psiR</name>
</gene>
<accession>A0A286LEZ9</accession>
<organism>
    <name type="scientific">Psilocybe cyanescens</name>
    <dbReference type="NCBI Taxonomy" id="93625"/>
    <lineage>
        <taxon>Eukaryota</taxon>
        <taxon>Fungi</taxon>
        <taxon>Dikarya</taxon>
        <taxon>Basidiomycota</taxon>
        <taxon>Agaricomycotina</taxon>
        <taxon>Agaricomycetes</taxon>
        <taxon>Agaricomycetidae</taxon>
        <taxon>Agaricales</taxon>
        <taxon>Agaricineae</taxon>
        <taxon>Strophariaceae</taxon>
        <taxon>Psilocybe</taxon>
    </lineage>
</organism>
<feature type="chain" id="PRO_0000445830" description="Psilocybin cluster transcription regulator">
    <location>
        <begin position="1"/>
        <end position="370"/>
    </location>
</feature>
<feature type="domain" description="bHLH" evidence="1">
    <location>
        <begin position="208"/>
        <end position="258"/>
    </location>
</feature>
<feature type="region of interest" description="Disordered" evidence="2">
    <location>
        <begin position="1"/>
        <end position="39"/>
    </location>
</feature>
<feature type="region of interest" description="Disordered" evidence="2">
    <location>
        <begin position="102"/>
        <end position="221"/>
    </location>
</feature>
<feature type="region of interest" description="Basic motif" evidence="1">
    <location>
        <begin position="208"/>
        <end position="221"/>
    </location>
</feature>
<feature type="region of interest" description="Helix-loop-helix motif" evidence="1">
    <location>
        <begin position="222"/>
        <end position="258"/>
    </location>
</feature>
<feature type="region of interest" description="Disordered" evidence="2">
    <location>
        <begin position="317"/>
        <end position="370"/>
    </location>
</feature>
<feature type="compositionally biased region" description="Polar residues" evidence="2">
    <location>
        <begin position="143"/>
        <end position="152"/>
    </location>
</feature>
<feature type="compositionally biased region" description="Low complexity" evidence="2">
    <location>
        <begin position="183"/>
        <end position="202"/>
    </location>
</feature>
<feature type="compositionally biased region" description="Basic and acidic residues" evidence="2">
    <location>
        <begin position="204"/>
        <end position="218"/>
    </location>
</feature>
<feature type="compositionally biased region" description="Basic and acidic residues" evidence="2">
    <location>
        <begin position="359"/>
        <end position="370"/>
    </location>
</feature>
<sequence length="370" mass="39103">MAPTTPATHDPALSHGAPPTQGSQAPANAAPNLTPADISGMQLNGLDQSQIMNLLRSLPGMFTGAKIPDQGQGNPKEDAAQTLSNLAQASSPFGGQHLPIHYQTGAAGGLPGINDPGPSTHPRGPPNLGQLSAVAMQAAPATIQHQDQQQSGRQEDGEQAGNTSIDSPSAKDGENGTGEFNQTSTSTPSGGRRGGRSATMGSDEWSRQRKDNHKEVERRRRGNINEGINELGRIVPSGSGEKAKGAILSRAVQYIHHLKENEARNIEKWTLEKLLMDQAMGDLQAQLEEIKRLWEEERMARTRLEAELEVLRNMNGVSTAGAGSGAAKDESAAGTKRRSTDGADAAGTNVEGGNNDNAEGERDGKRQRTE</sequence>
<reference key="1">
    <citation type="journal article" date="2017" name="Angew. Chem. Int. Ed.">
        <title>Enzymatic synthesis of psilocybin.</title>
        <authorList>
            <person name="Fricke J."/>
            <person name="Blei F."/>
            <person name="Hoffmeister D."/>
        </authorList>
    </citation>
    <scope>NUCLEOTIDE SEQUENCE [MRNA]</scope>
    <scope>IDENTIFICATION</scope>
    <scope>FUNCTION</scope>
    <source>
        <strain>FSU 12416</strain>
    </source>
</reference>
<evidence type="ECO:0000255" key="1">
    <source>
        <dbReference type="PROSITE-ProRule" id="PRU00981"/>
    </source>
</evidence>
<evidence type="ECO:0000256" key="2">
    <source>
        <dbReference type="SAM" id="MobiDB-lite"/>
    </source>
</evidence>
<evidence type="ECO:0000303" key="3">
    <source>
    </source>
</evidence>
<evidence type="ECO:0000305" key="4">
    <source>
    </source>
</evidence>
<keyword id="KW-0238">DNA-binding</keyword>
<keyword id="KW-0539">Nucleus</keyword>
<keyword id="KW-0804">Transcription</keyword>
<keyword id="KW-0805">Transcription regulation</keyword>
<dbReference type="EMBL" id="MF000994">
    <property type="protein sequence ID" value="ASU62247.1"/>
    <property type="molecule type" value="Genomic_DNA"/>
</dbReference>
<dbReference type="SMR" id="A0A286LEZ9"/>
<dbReference type="GO" id="GO:0005634">
    <property type="term" value="C:nucleus"/>
    <property type="evidence" value="ECO:0007669"/>
    <property type="project" value="UniProtKB-SubCell"/>
</dbReference>
<dbReference type="GO" id="GO:0003677">
    <property type="term" value="F:DNA binding"/>
    <property type="evidence" value="ECO:0007669"/>
    <property type="project" value="UniProtKB-KW"/>
</dbReference>
<dbReference type="GO" id="GO:0003700">
    <property type="term" value="F:DNA-binding transcription factor activity"/>
    <property type="evidence" value="ECO:0007669"/>
    <property type="project" value="InterPro"/>
</dbReference>
<dbReference type="GO" id="GO:0046983">
    <property type="term" value="F:protein dimerization activity"/>
    <property type="evidence" value="ECO:0007669"/>
    <property type="project" value="InterPro"/>
</dbReference>
<dbReference type="CDD" id="cd11398">
    <property type="entry name" value="bHLHzip_scCBP1"/>
    <property type="match status" value="1"/>
</dbReference>
<dbReference type="Gene3D" id="4.10.280.10">
    <property type="entry name" value="Helix-loop-helix DNA-binding domain"/>
    <property type="match status" value="1"/>
</dbReference>
<dbReference type="InterPro" id="IPR011598">
    <property type="entry name" value="bHLH_dom"/>
</dbReference>
<dbReference type="InterPro" id="IPR047206">
    <property type="entry name" value="bHLHzip_scCBP1-like"/>
</dbReference>
<dbReference type="InterPro" id="IPR036638">
    <property type="entry name" value="HLH_DNA-bd_sf"/>
</dbReference>
<dbReference type="PANTHER" id="PTHR47787">
    <property type="entry name" value="CENTROMERE-BINDING PROTEIN 1"/>
    <property type="match status" value="1"/>
</dbReference>
<dbReference type="PANTHER" id="PTHR47787:SF1">
    <property type="entry name" value="CENTROMERE-BINDING PROTEIN 1"/>
    <property type="match status" value="1"/>
</dbReference>
<dbReference type="Pfam" id="PF00010">
    <property type="entry name" value="HLH"/>
    <property type="match status" value="1"/>
</dbReference>
<dbReference type="SMART" id="SM00353">
    <property type="entry name" value="HLH"/>
    <property type="match status" value="1"/>
</dbReference>
<dbReference type="SUPFAM" id="SSF47459">
    <property type="entry name" value="HLH, helix-loop-helix DNA-binding domain"/>
    <property type="match status" value="1"/>
</dbReference>
<dbReference type="PROSITE" id="PS50888">
    <property type="entry name" value="BHLH"/>
    <property type="match status" value="1"/>
</dbReference>
<protein>
    <recommendedName>
        <fullName evidence="3">Psilocybin cluster transcription regulator</fullName>
    </recommendedName>
</protein>